<comment type="function">
    <text evidence="1">Forms oxaloacetate, a four-carbon dicarboxylic acid source for the tricarboxylic acid cycle.</text>
</comment>
<comment type="catalytic activity">
    <reaction evidence="1">
        <text>oxaloacetate + phosphate = phosphoenolpyruvate + hydrogencarbonate</text>
        <dbReference type="Rhea" id="RHEA:28370"/>
        <dbReference type="ChEBI" id="CHEBI:16452"/>
        <dbReference type="ChEBI" id="CHEBI:17544"/>
        <dbReference type="ChEBI" id="CHEBI:43474"/>
        <dbReference type="ChEBI" id="CHEBI:58702"/>
        <dbReference type="EC" id="4.1.1.31"/>
    </reaction>
</comment>
<comment type="cofactor">
    <cofactor evidence="1">
        <name>Mg(2+)</name>
        <dbReference type="ChEBI" id="CHEBI:18420"/>
    </cofactor>
</comment>
<comment type="similarity">
    <text evidence="1">Belongs to the PEPCase type 1 family.</text>
</comment>
<protein>
    <recommendedName>
        <fullName evidence="1">Phosphoenolpyruvate carboxylase</fullName>
        <shortName evidence="1">PEPC</shortName>
        <shortName evidence="1">PEPCase</shortName>
        <ecNumber evidence="1">4.1.1.31</ecNumber>
    </recommendedName>
</protein>
<accession>Q2IU23</accession>
<sequence length="933" mass="103411">MSSMILPTEPEALPNRADDSAALEAETRLRNDIRLLGRILGDTVRDQEGAAVFDLVEGIRQTSIRFHRDDDTTARRELEAILDGMSASDTVKIVRAFSYFSHLANIAEDQNNIRQMRVGSTAGSAPRAGMLAKTLAHARADGIGAAELRDFFKTALVSPVLTAHPTEVRRKSTMDREMQIAALLDERERVQLTPEEWEQNEEQLRRAVVTLWKTNLLRRTKLTVLDEVTNGLSFYDYTFLREVPRLHCALEDQLGGGEGAEADAELASFLRMGSWIGGDRDGNPFVTAEVLHGTLQLQSARVLRFYLDELHELGSELSLASHLVAISDEVRALAERSPDHSPHRRHEPYRLAVSGIYARLAATAAKLRIDSIRAPVGEAEAYASVHDFKADLDAIHRSLVAHNAGVIARGRLRQLRRAADCFGFHLASLDMRQNSAVHERTIAELMNAAHPASAYLEIGEDARIALLTAELRSARPLTSIFVKYSDETVGELAVLHEAAQAHATYGAAAIPQCIISMTKGVSDLLEVAVLLKEVGLIDPSGRSAINIVPLFETIEDLQASSAIMDRLLGIPEYRRLVDSRGGVQEVMLGYSDSNKDGGFVTSGWELYKAEIGLIEIFEHHGIRLRLFHGRGGSVGRGGGPSYDAIVAQPGGAVNGQIRITEQGEIITSKYSNREVGRNNLEILTAATLEASLLQPKRVAPQRDYLDAMEQLSAMAFKAYRGLVYETDGFVDYFWASTVITEISTLNIGSRPASRKKTRAIEDLRAIPWVFSWAQCRLMLPGWYGFGSAVEAWIAAHPDKGVPFLRSMYQEWPFFRTLLSNMDMVLSKSSLGIASRYAELVPDETLRREIFGRIRAEWHASVDGLLAIMGHDKLLQGNPLLDRSIRHRFPYLDPLNHVQVQLLREHRTHDPDEQILRGIQLTINGISAGLRNSG</sequence>
<dbReference type="EC" id="4.1.1.31" evidence="1"/>
<dbReference type="EMBL" id="CP000250">
    <property type="protein sequence ID" value="ABD08287.1"/>
    <property type="molecule type" value="Genomic_DNA"/>
</dbReference>
<dbReference type="RefSeq" id="WP_011442471.1">
    <property type="nucleotide sequence ID" value="NC_007778.1"/>
</dbReference>
<dbReference type="SMR" id="Q2IU23"/>
<dbReference type="STRING" id="316058.RPB_3592"/>
<dbReference type="KEGG" id="rpb:RPB_3592"/>
<dbReference type="eggNOG" id="COG2352">
    <property type="taxonomic scope" value="Bacteria"/>
</dbReference>
<dbReference type="HOGENOM" id="CLU_006557_2_0_5"/>
<dbReference type="OrthoDB" id="9768133at2"/>
<dbReference type="Proteomes" id="UP000008809">
    <property type="component" value="Chromosome"/>
</dbReference>
<dbReference type="GO" id="GO:0005829">
    <property type="term" value="C:cytosol"/>
    <property type="evidence" value="ECO:0007669"/>
    <property type="project" value="TreeGrafter"/>
</dbReference>
<dbReference type="GO" id="GO:0000287">
    <property type="term" value="F:magnesium ion binding"/>
    <property type="evidence" value="ECO:0007669"/>
    <property type="project" value="UniProtKB-UniRule"/>
</dbReference>
<dbReference type="GO" id="GO:0008964">
    <property type="term" value="F:phosphoenolpyruvate carboxylase activity"/>
    <property type="evidence" value="ECO:0007669"/>
    <property type="project" value="UniProtKB-UniRule"/>
</dbReference>
<dbReference type="GO" id="GO:0015977">
    <property type="term" value="P:carbon fixation"/>
    <property type="evidence" value="ECO:0007669"/>
    <property type="project" value="UniProtKB-UniRule"/>
</dbReference>
<dbReference type="GO" id="GO:0006107">
    <property type="term" value="P:oxaloacetate metabolic process"/>
    <property type="evidence" value="ECO:0007669"/>
    <property type="project" value="UniProtKB-UniRule"/>
</dbReference>
<dbReference type="GO" id="GO:0006099">
    <property type="term" value="P:tricarboxylic acid cycle"/>
    <property type="evidence" value="ECO:0007669"/>
    <property type="project" value="InterPro"/>
</dbReference>
<dbReference type="Gene3D" id="1.20.1440.90">
    <property type="entry name" value="Phosphoenolpyruvate/pyruvate domain"/>
    <property type="match status" value="1"/>
</dbReference>
<dbReference type="HAMAP" id="MF_00595">
    <property type="entry name" value="PEPcase_type1"/>
    <property type="match status" value="1"/>
</dbReference>
<dbReference type="InterPro" id="IPR021135">
    <property type="entry name" value="PEP_COase"/>
</dbReference>
<dbReference type="InterPro" id="IPR022805">
    <property type="entry name" value="PEP_COase_bac/pln-type"/>
</dbReference>
<dbReference type="InterPro" id="IPR018129">
    <property type="entry name" value="PEP_COase_Lys_AS"/>
</dbReference>
<dbReference type="InterPro" id="IPR033129">
    <property type="entry name" value="PEPCASE_His_AS"/>
</dbReference>
<dbReference type="InterPro" id="IPR015813">
    <property type="entry name" value="Pyrv/PenolPyrv_kinase-like_dom"/>
</dbReference>
<dbReference type="NCBIfam" id="NF000584">
    <property type="entry name" value="PRK00009.1"/>
    <property type="match status" value="1"/>
</dbReference>
<dbReference type="PANTHER" id="PTHR30523">
    <property type="entry name" value="PHOSPHOENOLPYRUVATE CARBOXYLASE"/>
    <property type="match status" value="1"/>
</dbReference>
<dbReference type="PANTHER" id="PTHR30523:SF6">
    <property type="entry name" value="PHOSPHOENOLPYRUVATE CARBOXYLASE"/>
    <property type="match status" value="1"/>
</dbReference>
<dbReference type="Pfam" id="PF00311">
    <property type="entry name" value="PEPcase"/>
    <property type="match status" value="1"/>
</dbReference>
<dbReference type="PRINTS" id="PR00150">
    <property type="entry name" value="PEPCARBXLASE"/>
</dbReference>
<dbReference type="SUPFAM" id="SSF51621">
    <property type="entry name" value="Phosphoenolpyruvate/pyruvate domain"/>
    <property type="match status" value="1"/>
</dbReference>
<dbReference type="PROSITE" id="PS00781">
    <property type="entry name" value="PEPCASE_1"/>
    <property type="match status" value="1"/>
</dbReference>
<dbReference type="PROSITE" id="PS00393">
    <property type="entry name" value="PEPCASE_2"/>
    <property type="match status" value="1"/>
</dbReference>
<name>CAPP_RHOP2</name>
<evidence type="ECO:0000255" key="1">
    <source>
        <dbReference type="HAMAP-Rule" id="MF_00595"/>
    </source>
</evidence>
<feature type="chain" id="PRO_1000025583" description="Phosphoenolpyruvate carboxylase">
    <location>
        <begin position="1"/>
        <end position="933"/>
    </location>
</feature>
<feature type="active site" evidence="1">
    <location>
        <position position="164"/>
    </location>
</feature>
<feature type="active site" evidence="1">
    <location>
        <position position="595"/>
    </location>
</feature>
<proteinExistence type="inferred from homology"/>
<organism>
    <name type="scientific">Rhodopseudomonas palustris (strain HaA2)</name>
    <dbReference type="NCBI Taxonomy" id="316058"/>
    <lineage>
        <taxon>Bacteria</taxon>
        <taxon>Pseudomonadati</taxon>
        <taxon>Pseudomonadota</taxon>
        <taxon>Alphaproteobacteria</taxon>
        <taxon>Hyphomicrobiales</taxon>
        <taxon>Nitrobacteraceae</taxon>
        <taxon>Rhodopseudomonas</taxon>
    </lineage>
</organism>
<reference key="1">
    <citation type="submission" date="2006-01" db="EMBL/GenBank/DDBJ databases">
        <title>Complete sequence of Rhodopseudomonas palustris HaA2.</title>
        <authorList>
            <consortium name="US DOE Joint Genome Institute"/>
            <person name="Copeland A."/>
            <person name="Lucas S."/>
            <person name="Lapidus A."/>
            <person name="Barry K."/>
            <person name="Detter J.C."/>
            <person name="Glavina T."/>
            <person name="Hammon N."/>
            <person name="Israni S."/>
            <person name="Pitluck S."/>
            <person name="Chain P."/>
            <person name="Malfatti S."/>
            <person name="Shin M."/>
            <person name="Vergez L."/>
            <person name="Schmutz J."/>
            <person name="Larimer F."/>
            <person name="Land M."/>
            <person name="Hauser L."/>
            <person name="Pelletier D.A."/>
            <person name="Kyrpides N."/>
            <person name="Anderson I."/>
            <person name="Oda Y."/>
            <person name="Harwood C.S."/>
            <person name="Richardson P."/>
        </authorList>
    </citation>
    <scope>NUCLEOTIDE SEQUENCE [LARGE SCALE GENOMIC DNA]</scope>
    <source>
        <strain>HaA2</strain>
    </source>
</reference>
<gene>
    <name evidence="1" type="primary">ppc</name>
    <name type="ordered locus">RPB_3592</name>
</gene>
<keyword id="KW-0120">Carbon dioxide fixation</keyword>
<keyword id="KW-0456">Lyase</keyword>
<keyword id="KW-0460">Magnesium</keyword>
<keyword id="KW-1185">Reference proteome</keyword>